<sequence>MDFRLNDEQELFVDGVRELMASENWEAYFAQCDRESKYPERFVKALADMEIDNLLIPEEHGGLNAGFVTVAAIWMELGRLGAPTYVLYQLPGGFNTVLREGTQEQIDKIMAFRGTGKQMWNSAITEPGAGSDVGSLQTTYTRKNGKVYLNGSKCFITSSAYTPYIVVMSRDAASPDKPIFTEWFVDMSKPGIKVTKLEKLGLRMDSCCEITFDNVELEEKDMFGREGNGFNRVKEEFDHERFLVALTNYGTAMCAFEDAARYANQRVQFGETIGRFQLIQEKFAHMAIKLNSMRNMLYETAWKSDNGLITSGDAAMCKYFCANAAFEVVDSAMQVLGGVGIAGEHRIARFWRDLRVDRVSGGSDEMQILTLGRAVLKQYR</sequence>
<feature type="chain" id="PRO_0000201196" description="Crotonobetainyl-CoA reductase">
    <location>
        <begin position="1"/>
        <end position="380"/>
    </location>
</feature>
<evidence type="ECO:0000255" key="1">
    <source>
        <dbReference type="HAMAP-Rule" id="MF_01052"/>
    </source>
</evidence>
<gene>
    <name evidence="1" type="primary">caiA</name>
</gene>
<accession>Q8GB20</accession>
<dbReference type="EC" id="1.3.8.13" evidence="1"/>
<dbReference type="EMBL" id="AJ508908">
    <property type="protein sequence ID" value="CAD48579.1"/>
    <property type="molecule type" value="Genomic_DNA"/>
</dbReference>
<dbReference type="SMR" id="Q8GB20"/>
<dbReference type="BRENDA" id="1.3.8.13">
    <property type="organism ID" value="5048"/>
</dbReference>
<dbReference type="UniPathway" id="UPA00117"/>
<dbReference type="GO" id="GO:0005737">
    <property type="term" value="C:cytoplasm"/>
    <property type="evidence" value="ECO:0007669"/>
    <property type="project" value="UniProtKB-SubCell"/>
</dbReference>
<dbReference type="GO" id="GO:0003995">
    <property type="term" value="F:acyl-CoA dehydrogenase activity"/>
    <property type="evidence" value="ECO:0007669"/>
    <property type="project" value="InterPro"/>
</dbReference>
<dbReference type="GO" id="GO:0050660">
    <property type="term" value="F:flavin adenine dinucleotide binding"/>
    <property type="evidence" value="ECO:0007669"/>
    <property type="project" value="InterPro"/>
</dbReference>
<dbReference type="GO" id="GO:0009437">
    <property type="term" value="P:carnitine metabolic process"/>
    <property type="evidence" value="ECO:0007669"/>
    <property type="project" value="UniProtKB-UniRule"/>
</dbReference>
<dbReference type="CDD" id="cd00567">
    <property type="entry name" value="ACAD"/>
    <property type="match status" value="1"/>
</dbReference>
<dbReference type="FunFam" id="1.20.140.10:FF:000001">
    <property type="entry name" value="Acyl-CoA dehydrogenase"/>
    <property type="match status" value="1"/>
</dbReference>
<dbReference type="FunFam" id="2.40.110.10:FF:000002">
    <property type="entry name" value="Acyl-CoA dehydrogenase fadE12"/>
    <property type="match status" value="1"/>
</dbReference>
<dbReference type="Gene3D" id="1.10.540.10">
    <property type="entry name" value="Acyl-CoA dehydrogenase/oxidase, N-terminal domain"/>
    <property type="match status" value="1"/>
</dbReference>
<dbReference type="Gene3D" id="2.40.110.10">
    <property type="entry name" value="Butyryl-CoA Dehydrogenase, subunit A, domain 2"/>
    <property type="match status" value="1"/>
</dbReference>
<dbReference type="Gene3D" id="1.20.140.10">
    <property type="entry name" value="Butyryl-CoA Dehydrogenase, subunit A, domain 3"/>
    <property type="match status" value="1"/>
</dbReference>
<dbReference type="HAMAP" id="MF_01052">
    <property type="entry name" value="CaiA"/>
    <property type="match status" value="1"/>
</dbReference>
<dbReference type="InterPro" id="IPR006089">
    <property type="entry name" value="Acyl-CoA_DH_CS"/>
</dbReference>
<dbReference type="InterPro" id="IPR006091">
    <property type="entry name" value="Acyl-CoA_Oxase/DH_mid-dom"/>
</dbReference>
<dbReference type="InterPro" id="IPR046373">
    <property type="entry name" value="Acyl-CoA_Oxase/DH_mid-dom_sf"/>
</dbReference>
<dbReference type="InterPro" id="IPR036250">
    <property type="entry name" value="AcylCo_DH-like_C"/>
</dbReference>
<dbReference type="InterPro" id="IPR009075">
    <property type="entry name" value="AcylCo_DH/oxidase_C"/>
</dbReference>
<dbReference type="InterPro" id="IPR013786">
    <property type="entry name" value="AcylCoA_DH/ox_N"/>
</dbReference>
<dbReference type="InterPro" id="IPR037069">
    <property type="entry name" value="AcylCoA_DH/ox_N_sf"/>
</dbReference>
<dbReference type="InterPro" id="IPR009100">
    <property type="entry name" value="AcylCoA_DH/oxidase_NM_dom_sf"/>
</dbReference>
<dbReference type="InterPro" id="IPR023450">
    <property type="entry name" value="CaiA"/>
</dbReference>
<dbReference type="NCBIfam" id="NF002885">
    <property type="entry name" value="PRK03354.1"/>
    <property type="match status" value="1"/>
</dbReference>
<dbReference type="PANTHER" id="PTHR43884">
    <property type="entry name" value="ACYL-COA DEHYDROGENASE"/>
    <property type="match status" value="1"/>
</dbReference>
<dbReference type="PANTHER" id="PTHR43884:SF12">
    <property type="entry name" value="ISOVALERYL-COA DEHYDROGENASE, MITOCHONDRIAL-RELATED"/>
    <property type="match status" value="1"/>
</dbReference>
<dbReference type="Pfam" id="PF00441">
    <property type="entry name" value="Acyl-CoA_dh_1"/>
    <property type="match status" value="1"/>
</dbReference>
<dbReference type="Pfam" id="PF02770">
    <property type="entry name" value="Acyl-CoA_dh_M"/>
    <property type="match status" value="1"/>
</dbReference>
<dbReference type="Pfam" id="PF02771">
    <property type="entry name" value="Acyl-CoA_dh_N"/>
    <property type="match status" value="1"/>
</dbReference>
<dbReference type="PIRSF" id="PIRSF016578">
    <property type="entry name" value="HsaA"/>
    <property type="match status" value="1"/>
</dbReference>
<dbReference type="SUPFAM" id="SSF47203">
    <property type="entry name" value="Acyl-CoA dehydrogenase C-terminal domain-like"/>
    <property type="match status" value="1"/>
</dbReference>
<dbReference type="SUPFAM" id="SSF56645">
    <property type="entry name" value="Acyl-CoA dehydrogenase NM domain-like"/>
    <property type="match status" value="1"/>
</dbReference>
<dbReference type="PROSITE" id="PS00072">
    <property type="entry name" value="ACYL_COA_DH_1"/>
    <property type="match status" value="1"/>
</dbReference>
<dbReference type="PROSITE" id="PS00073">
    <property type="entry name" value="ACYL_COA_DH_2"/>
    <property type="match status" value="1"/>
</dbReference>
<organism>
    <name type="scientific">Proteus sp. (strain LE138)</name>
    <dbReference type="NCBI Taxonomy" id="217617"/>
    <lineage>
        <taxon>Bacteria</taxon>
        <taxon>Pseudomonadati</taxon>
        <taxon>Pseudomonadota</taxon>
        <taxon>Gammaproteobacteria</taxon>
        <taxon>Enterobacterales</taxon>
        <taxon>Morganellaceae</taxon>
        <taxon>Proteus</taxon>
    </lineage>
</organism>
<keyword id="KW-0963">Cytoplasm</keyword>
<keyword id="KW-0274">FAD</keyword>
<keyword id="KW-0285">Flavoprotein</keyword>
<keyword id="KW-0560">Oxidoreductase</keyword>
<name>CAIA_PROSL</name>
<proteinExistence type="inferred from homology"/>
<reference key="1">
    <citation type="submission" date="2002-09" db="EMBL/GenBank/DDBJ databases">
        <title>Cai locus and corresponding enzymes of Proteus sp.</title>
        <authorList>
            <person name="Engemann C."/>
            <person name="Elssner T."/>
            <person name="Pfeifer S."/>
            <person name="Krumbholz C."/>
            <person name="Maier T."/>
            <person name="Kleber H.-P."/>
        </authorList>
    </citation>
    <scope>NUCLEOTIDE SEQUENCE [GENOMIC DNA]</scope>
</reference>
<protein>
    <recommendedName>
        <fullName evidence="1">Crotonobetainyl-CoA reductase</fullName>
        <ecNumber evidence="1">1.3.8.13</ecNumber>
    </recommendedName>
    <alternativeName>
        <fullName evidence="1">Crotonobetainyl-CoA dehydrogenase</fullName>
    </alternativeName>
</protein>
<comment type="function">
    <text evidence="1">Catalyzes the reduction of crotonobetainyl-CoA to gamma-butyrobetainyl-CoA.</text>
</comment>
<comment type="catalytic activity">
    <reaction evidence="1">
        <text>4-(trimethylamino)butanoyl-CoA + oxidized [electron-transfer flavoprotein] + H(+) = crotonobetainyl-CoA + reduced [electron-transfer flavoprotein]</text>
        <dbReference type="Rhea" id="RHEA:51584"/>
        <dbReference type="Rhea" id="RHEA-COMP:10685"/>
        <dbReference type="Rhea" id="RHEA-COMP:10686"/>
        <dbReference type="ChEBI" id="CHEBI:15378"/>
        <dbReference type="ChEBI" id="CHEBI:57692"/>
        <dbReference type="ChEBI" id="CHEBI:58307"/>
        <dbReference type="ChEBI" id="CHEBI:60933"/>
        <dbReference type="ChEBI" id="CHEBI:61513"/>
        <dbReference type="EC" id="1.3.8.13"/>
    </reaction>
</comment>
<comment type="cofactor">
    <cofactor evidence="1">
        <name>FAD</name>
        <dbReference type="ChEBI" id="CHEBI:57692"/>
    </cofactor>
</comment>
<comment type="pathway">
    <text evidence="1">Amine and polyamine metabolism; carnitine metabolism.</text>
</comment>
<comment type="subunit">
    <text evidence="1">Homotetramer.</text>
</comment>
<comment type="subcellular location">
    <subcellularLocation>
        <location evidence="1">Cytoplasm</location>
    </subcellularLocation>
</comment>
<comment type="similarity">
    <text evidence="1">Belongs to the acyl-CoA dehydrogenase family.</text>
</comment>